<proteinExistence type="inferred from homology"/>
<gene>
    <name evidence="1" type="primary">rplN</name>
    <name type="ordered locus">spr0199</name>
</gene>
<keyword id="KW-1185">Reference proteome</keyword>
<keyword id="KW-0687">Ribonucleoprotein</keyword>
<keyword id="KW-0689">Ribosomal protein</keyword>
<keyword id="KW-0694">RNA-binding</keyword>
<keyword id="KW-0699">rRNA-binding</keyword>
<dbReference type="EMBL" id="AF126059">
    <property type="protein sequence ID" value="AAD33266.1"/>
    <property type="molecule type" value="Genomic_DNA"/>
</dbReference>
<dbReference type="EMBL" id="AE007317">
    <property type="protein sequence ID" value="AAK99003.1"/>
    <property type="molecule type" value="Genomic_DNA"/>
</dbReference>
<dbReference type="PIR" id="G97896">
    <property type="entry name" value="G97896"/>
</dbReference>
<dbReference type="RefSeq" id="NP_357793.1">
    <property type="nucleotide sequence ID" value="NC_003098.1"/>
</dbReference>
<dbReference type="RefSeq" id="WP_000616545.1">
    <property type="nucleotide sequence ID" value="NC_003098.1"/>
</dbReference>
<dbReference type="SMR" id="P0A474"/>
<dbReference type="STRING" id="171101.spr0199"/>
<dbReference type="GeneID" id="93738967"/>
<dbReference type="KEGG" id="spr:spr0199"/>
<dbReference type="PATRIC" id="fig|171101.6.peg.230"/>
<dbReference type="eggNOG" id="COG0093">
    <property type="taxonomic scope" value="Bacteria"/>
</dbReference>
<dbReference type="HOGENOM" id="CLU_095071_2_1_9"/>
<dbReference type="PRO" id="PR:P0A474"/>
<dbReference type="Proteomes" id="UP000000586">
    <property type="component" value="Chromosome"/>
</dbReference>
<dbReference type="GO" id="GO:0022625">
    <property type="term" value="C:cytosolic large ribosomal subunit"/>
    <property type="evidence" value="ECO:0000318"/>
    <property type="project" value="GO_Central"/>
</dbReference>
<dbReference type="GO" id="GO:0070180">
    <property type="term" value="F:large ribosomal subunit rRNA binding"/>
    <property type="evidence" value="ECO:0000318"/>
    <property type="project" value="GO_Central"/>
</dbReference>
<dbReference type="GO" id="GO:0003735">
    <property type="term" value="F:structural constituent of ribosome"/>
    <property type="evidence" value="ECO:0000318"/>
    <property type="project" value="GO_Central"/>
</dbReference>
<dbReference type="GO" id="GO:0006412">
    <property type="term" value="P:translation"/>
    <property type="evidence" value="ECO:0007669"/>
    <property type="project" value="UniProtKB-UniRule"/>
</dbReference>
<dbReference type="CDD" id="cd00337">
    <property type="entry name" value="Ribosomal_uL14"/>
    <property type="match status" value="1"/>
</dbReference>
<dbReference type="FunFam" id="2.40.150.20:FF:000001">
    <property type="entry name" value="50S ribosomal protein L14"/>
    <property type="match status" value="1"/>
</dbReference>
<dbReference type="Gene3D" id="2.40.150.20">
    <property type="entry name" value="Ribosomal protein L14"/>
    <property type="match status" value="1"/>
</dbReference>
<dbReference type="HAMAP" id="MF_01367">
    <property type="entry name" value="Ribosomal_uL14"/>
    <property type="match status" value="1"/>
</dbReference>
<dbReference type="InterPro" id="IPR000218">
    <property type="entry name" value="Ribosomal_uL14"/>
</dbReference>
<dbReference type="InterPro" id="IPR005745">
    <property type="entry name" value="Ribosomal_uL14_bac-type"/>
</dbReference>
<dbReference type="InterPro" id="IPR019972">
    <property type="entry name" value="Ribosomal_uL14_CS"/>
</dbReference>
<dbReference type="InterPro" id="IPR036853">
    <property type="entry name" value="Ribosomal_uL14_sf"/>
</dbReference>
<dbReference type="NCBIfam" id="TIGR01067">
    <property type="entry name" value="rplN_bact"/>
    <property type="match status" value="1"/>
</dbReference>
<dbReference type="PANTHER" id="PTHR11761">
    <property type="entry name" value="50S/60S RIBOSOMAL PROTEIN L14/L23"/>
    <property type="match status" value="1"/>
</dbReference>
<dbReference type="PANTHER" id="PTHR11761:SF3">
    <property type="entry name" value="LARGE RIBOSOMAL SUBUNIT PROTEIN UL14M"/>
    <property type="match status" value="1"/>
</dbReference>
<dbReference type="Pfam" id="PF00238">
    <property type="entry name" value="Ribosomal_L14"/>
    <property type="match status" value="1"/>
</dbReference>
<dbReference type="SMART" id="SM01374">
    <property type="entry name" value="Ribosomal_L14"/>
    <property type="match status" value="1"/>
</dbReference>
<dbReference type="SUPFAM" id="SSF50193">
    <property type="entry name" value="Ribosomal protein L14"/>
    <property type="match status" value="1"/>
</dbReference>
<dbReference type="PROSITE" id="PS00049">
    <property type="entry name" value="RIBOSOMAL_L14"/>
    <property type="match status" value="1"/>
</dbReference>
<organism>
    <name type="scientific">Streptococcus pneumoniae (strain ATCC BAA-255 / R6)</name>
    <dbReference type="NCBI Taxonomy" id="171101"/>
    <lineage>
        <taxon>Bacteria</taxon>
        <taxon>Bacillati</taxon>
        <taxon>Bacillota</taxon>
        <taxon>Bacilli</taxon>
        <taxon>Lactobacillales</taxon>
        <taxon>Streptococcaceae</taxon>
        <taxon>Streptococcus</taxon>
    </lineage>
</organism>
<evidence type="ECO:0000255" key="1">
    <source>
        <dbReference type="HAMAP-Rule" id="MF_01367"/>
    </source>
</evidence>
<evidence type="ECO:0000305" key="2"/>
<sequence>MIQTETRLKVADNSGAREILTIKVLGGSGRKFANIGDVIVASVKQATPGGAVKKGDVVKAVIVRTKSGARRADGSYIKFDENAAVIIREDKTPRGTRIFGPVARELREGGFMKIVSLAPEVL</sequence>
<comment type="function">
    <text evidence="1">Binds to 23S rRNA. Forms part of two intersubunit bridges in the 70S ribosome.</text>
</comment>
<comment type="subunit">
    <text evidence="1">Part of the 50S ribosomal subunit. Forms a cluster with proteins L3 and L19. In the 70S ribosome, L14 and L19 interact and together make contacts with the 16S rRNA in bridges B5 and B8.</text>
</comment>
<comment type="similarity">
    <text evidence="1">Belongs to the universal ribosomal protein uL14 family.</text>
</comment>
<feature type="chain" id="PRO_0000128561" description="Large ribosomal subunit protein uL14">
    <location>
        <begin position="1"/>
        <end position="122"/>
    </location>
</feature>
<accession>P0A474</accession>
<accession>Q9WVZ2</accession>
<protein>
    <recommendedName>
        <fullName evidence="1">Large ribosomal subunit protein uL14</fullName>
    </recommendedName>
    <alternativeName>
        <fullName evidence="2">50S ribosomal protein L14</fullName>
    </alternativeName>
</protein>
<reference key="1">
    <citation type="journal article" date="2000" name="Antimicrob. Agents Chemother.">
        <title>Mutations in ribosomal protein L16 conferring reduced susceptibility to evernimicin (SCH27899): implications for mechanism of action.</title>
        <authorList>
            <person name="Adrian P.V."/>
            <person name="Zhao W."/>
            <person name="Black T.A."/>
            <person name="Shaw K.J."/>
            <person name="Hare R.S."/>
            <person name="Klugman K.P."/>
        </authorList>
    </citation>
    <scope>NUCLEOTIDE SEQUENCE [GENOMIC DNA]</scope>
</reference>
<reference key="2">
    <citation type="journal article" date="2001" name="J. Bacteriol.">
        <title>Genome of the bacterium Streptococcus pneumoniae strain R6.</title>
        <authorList>
            <person name="Hoskins J."/>
            <person name="Alborn W.E. Jr."/>
            <person name="Arnold J."/>
            <person name="Blaszczak L.C."/>
            <person name="Burgett S."/>
            <person name="DeHoff B.S."/>
            <person name="Estrem S.T."/>
            <person name="Fritz L."/>
            <person name="Fu D.-J."/>
            <person name="Fuller W."/>
            <person name="Geringer C."/>
            <person name="Gilmour R."/>
            <person name="Glass J.S."/>
            <person name="Khoja H."/>
            <person name="Kraft A.R."/>
            <person name="Lagace R.E."/>
            <person name="LeBlanc D.J."/>
            <person name="Lee L.N."/>
            <person name="Lefkowitz E.J."/>
            <person name="Lu J."/>
            <person name="Matsushima P."/>
            <person name="McAhren S.M."/>
            <person name="McHenney M."/>
            <person name="McLeaster K."/>
            <person name="Mundy C.W."/>
            <person name="Nicas T.I."/>
            <person name="Norris F.H."/>
            <person name="O'Gara M."/>
            <person name="Peery R.B."/>
            <person name="Robertson G.T."/>
            <person name="Rockey P."/>
            <person name="Sun P.-M."/>
            <person name="Winkler M.E."/>
            <person name="Yang Y."/>
            <person name="Young-Bellido M."/>
            <person name="Zhao G."/>
            <person name="Zook C.A."/>
            <person name="Baltz R.H."/>
            <person name="Jaskunas S.R."/>
            <person name="Rosteck P.R. Jr."/>
            <person name="Skatrud P.L."/>
            <person name="Glass J.I."/>
        </authorList>
    </citation>
    <scope>NUCLEOTIDE SEQUENCE [LARGE SCALE GENOMIC DNA]</scope>
    <source>
        <strain>ATCC BAA-255 / R6</strain>
    </source>
</reference>
<name>RL14_STRR6</name>